<evidence type="ECO:0000255" key="1">
    <source>
        <dbReference type="HAMAP-Rule" id="MF_00360"/>
    </source>
</evidence>
<evidence type="ECO:0000305" key="2"/>
<protein>
    <recommendedName>
        <fullName evidence="1">Small ribosomal subunit protein bS6</fullName>
    </recommendedName>
    <alternativeName>
        <fullName evidence="2">30S ribosomal protein S6</fullName>
    </alternativeName>
</protein>
<dbReference type="EMBL" id="CP000488">
    <property type="protein sequence ID" value="ABL02406.1"/>
    <property type="molecule type" value="Genomic_DNA"/>
</dbReference>
<dbReference type="RefSeq" id="WP_011738031.1">
    <property type="nucleotide sequence ID" value="NC_008610.1"/>
</dbReference>
<dbReference type="SMR" id="A1AWU9"/>
<dbReference type="STRING" id="413404.Rmag_0664"/>
<dbReference type="KEGG" id="rma:Rmag_0664"/>
<dbReference type="eggNOG" id="COG0360">
    <property type="taxonomic scope" value="Bacteria"/>
</dbReference>
<dbReference type="HOGENOM" id="CLU_113441_6_0_6"/>
<dbReference type="OrthoDB" id="9812702at2"/>
<dbReference type="Proteomes" id="UP000002587">
    <property type="component" value="Chromosome"/>
</dbReference>
<dbReference type="GO" id="GO:0022627">
    <property type="term" value="C:cytosolic small ribosomal subunit"/>
    <property type="evidence" value="ECO:0007669"/>
    <property type="project" value="TreeGrafter"/>
</dbReference>
<dbReference type="GO" id="GO:0070181">
    <property type="term" value="F:small ribosomal subunit rRNA binding"/>
    <property type="evidence" value="ECO:0007669"/>
    <property type="project" value="TreeGrafter"/>
</dbReference>
<dbReference type="GO" id="GO:0003735">
    <property type="term" value="F:structural constituent of ribosome"/>
    <property type="evidence" value="ECO:0007669"/>
    <property type="project" value="InterPro"/>
</dbReference>
<dbReference type="GO" id="GO:0006412">
    <property type="term" value="P:translation"/>
    <property type="evidence" value="ECO:0007669"/>
    <property type="project" value="UniProtKB-UniRule"/>
</dbReference>
<dbReference type="CDD" id="cd00473">
    <property type="entry name" value="bS6"/>
    <property type="match status" value="1"/>
</dbReference>
<dbReference type="Gene3D" id="3.30.70.60">
    <property type="match status" value="1"/>
</dbReference>
<dbReference type="HAMAP" id="MF_00360">
    <property type="entry name" value="Ribosomal_bS6"/>
    <property type="match status" value="1"/>
</dbReference>
<dbReference type="InterPro" id="IPR000529">
    <property type="entry name" value="Ribosomal_bS6"/>
</dbReference>
<dbReference type="InterPro" id="IPR020815">
    <property type="entry name" value="Ribosomal_bS6_CS"/>
</dbReference>
<dbReference type="InterPro" id="IPR035980">
    <property type="entry name" value="Ribosomal_bS6_sf"/>
</dbReference>
<dbReference type="InterPro" id="IPR020814">
    <property type="entry name" value="Ribosomal_S6_plastid/chlpt"/>
</dbReference>
<dbReference type="InterPro" id="IPR014717">
    <property type="entry name" value="Transl_elong_EF1B/ribsomal_bS6"/>
</dbReference>
<dbReference type="NCBIfam" id="TIGR00166">
    <property type="entry name" value="S6"/>
    <property type="match status" value="1"/>
</dbReference>
<dbReference type="PANTHER" id="PTHR21011">
    <property type="entry name" value="MITOCHONDRIAL 28S RIBOSOMAL PROTEIN S6"/>
    <property type="match status" value="1"/>
</dbReference>
<dbReference type="PANTHER" id="PTHR21011:SF1">
    <property type="entry name" value="SMALL RIBOSOMAL SUBUNIT PROTEIN BS6M"/>
    <property type="match status" value="1"/>
</dbReference>
<dbReference type="Pfam" id="PF01250">
    <property type="entry name" value="Ribosomal_S6"/>
    <property type="match status" value="1"/>
</dbReference>
<dbReference type="SUPFAM" id="SSF54995">
    <property type="entry name" value="Ribosomal protein S6"/>
    <property type="match status" value="1"/>
</dbReference>
<dbReference type="PROSITE" id="PS01048">
    <property type="entry name" value="RIBOSOMAL_S6"/>
    <property type="match status" value="1"/>
</dbReference>
<proteinExistence type="inferred from homology"/>
<accession>A1AWU9</accession>
<reference key="1">
    <citation type="journal article" date="2007" name="Science">
        <title>The Calyptogena magnifica chemoautotrophic symbiont genome.</title>
        <authorList>
            <person name="Newton I.L.G."/>
            <person name="Woyke T."/>
            <person name="Auchtung T.A."/>
            <person name="Dilly G.F."/>
            <person name="Dutton R.J."/>
            <person name="Fisher M.C."/>
            <person name="Fontanez K.M."/>
            <person name="Lau E."/>
            <person name="Stewart F.J."/>
            <person name="Richardson P.M."/>
            <person name="Barry K.W."/>
            <person name="Saunders E."/>
            <person name="Detter J.C."/>
            <person name="Wu D."/>
            <person name="Eisen J.A."/>
            <person name="Cavanaugh C.M."/>
        </authorList>
    </citation>
    <scope>NUCLEOTIDE SEQUENCE [LARGE SCALE GENOMIC DNA]</scope>
</reference>
<gene>
    <name evidence="1" type="primary">rpsF</name>
    <name type="ordered locus">Rmag_0664</name>
</gene>
<keyword id="KW-0687">Ribonucleoprotein</keyword>
<keyword id="KW-0689">Ribosomal protein</keyword>
<keyword id="KW-0694">RNA-binding</keyword>
<keyword id="KW-0699">rRNA-binding</keyword>
<comment type="function">
    <text evidence="1">Binds together with bS18 to 16S ribosomal RNA.</text>
</comment>
<comment type="similarity">
    <text evidence="1">Belongs to the bacterial ribosomal protein bS6 family.</text>
</comment>
<sequence length="113" mass="13228">MRHYEITLIVHPDQSAQVGTMMEKYKEIITTGGGKIHRKEDWGRKHLAYPIKKIYKAHYLMMNIECDQEVLDKLNYNFRFNDAILRNLIISEDGVITTPSIMMANKDKEKGRS</sequence>
<organism>
    <name type="scientific">Ruthia magnifica subsp. Calyptogena magnifica</name>
    <dbReference type="NCBI Taxonomy" id="413404"/>
    <lineage>
        <taxon>Bacteria</taxon>
        <taxon>Pseudomonadati</taxon>
        <taxon>Pseudomonadota</taxon>
        <taxon>Gammaproteobacteria</taxon>
        <taxon>Candidatus Pseudothioglobaceae</taxon>
        <taxon>Candidatus Ruthturnera</taxon>
    </lineage>
</organism>
<feature type="chain" id="PRO_1000005340" description="Small ribosomal subunit protein bS6">
    <location>
        <begin position="1"/>
        <end position="113"/>
    </location>
</feature>
<name>RS6_RUTMC</name>